<reference key="1">
    <citation type="journal article" date="2002" name="Science">
        <title>50 million years of genomic stasis in endosymbiotic bacteria.</title>
        <authorList>
            <person name="Tamas I."/>
            <person name="Klasson L."/>
            <person name="Canbaeck B."/>
            <person name="Naeslund A.K."/>
            <person name="Eriksson A.-S."/>
            <person name="Wernegreen J.J."/>
            <person name="Sandstroem J.P."/>
            <person name="Moran N.A."/>
            <person name="Andersson S.G.E."/>
        </authorList>
    </citation>
    <scope>NUCLEOTIDE SEQUENCE [LARGE SCALE GENOMIC DNA]</scope>
    <source>
        <strain>Sg</strain>
    </source>
</reference>
<protein>
    <recommendedName>
        <fullName evidence="1">3-dehydroquinate synthase</fullName>
        <shortName evidence="1">DHQS</shortName>
        <ecNumber evidence="1">4.2.3.4</ecNumber>
    </recommendedName>
</protein>
<feature type="chain" id="PRO_0000140718" description="3-dehydroquinate synthase">
    <location>
        <begin position="1"/>
        <end position="360"/>
    </location>
</feature>
<feature type="binding site" evidence="1">
    <location>
        <begin position="71"/>
        <end position="76"/>
    </location>
    <ligand>
        <name>NAD(+)</name>
        <dbReference type="ChEBI" id="CHEBI:57540"/>
    </ligand>
</feature>
<feature type="binding site" evidence="1">
    <location>
        <begin position="105"/>
        <end position="109"/>
    </location>
    <ligand>
        <name>NAD(+)</name>
        <dbReference type="ChEBI" id="CHEBI:57540"/>
    </ligand>
</feature>
<feature type="binding site" evidence="1">
    <location>
        <begin position="129"/>
        <end position="130"/>
    </location>
    <ligand>
        <name>NAD(+)</name>
        <dbReference type="ChEBI" id="CHEBI:57540"/>
    </ligand>
</feature>
<feature type="binding site" evidence="1">
    <location>
        <position position="142"/>
    </location>
    <ligand>
        <name>NAD(+)</name>
        <dbReference type="ChEBI" id="CHEBI:57540"/>
    </ligand>
</feature>
<feature type="binding site" evidence="1">
    <location>
        <position position="151"/>
    </location>
    <ligand>
        <name>NAD(+)</name>
        <dbReference type="ChEBI" id="CHEBI:57540"/>
    </ligand>
</feature>
<feature type="binding site" evidence="1">
    <location>
        <begin position="169"/>
        <end position="172"/>
    </location>
    <ligand>
        <name>NAD(+)</name>
        <dbReference type="ChEBI" id="CHEBI:57540"/>
    </ligand>
</feature>
<feature type="binding site" evidence="1">
    <location>
        <position position="184"/>
    </location>
    <ligand>
        <name>Zn(2+)</name>
        <dbReference type="ChEBI" id="CHEBI:29105"/>
    </ligand>
</feature>
<feature type="binding site" evidence="1">
    <location>
        <position position="247"/>
    </location>
    <ligand>
        <name>Zn(2+)</name>
        <dbReference type="ChEBI" id="CHEBI:29105"/>
    </ligand>
</feature>
<feature type="binding site" evidence="1">
    <location>
        <position position="264"/>
    </location>
    <ligand>
        <name>Zn(2+)</name>
        <dbReference type="ChEBI" id="CHEBI:29105"/>
    </ligand>
</feature>
<evidence type="ECO:0000255" key="1">
    <source>
        <dbReference type="HAMAP-Rule" id="MF_00110"/>
    </source>
</evidence>
<name>AROB_BUCAP</name>
<dbReference type="EC" id="4.2.3.4" evidence="1"/>
<dbReference type="EMBL" id="AE013218">
    <property type="protein sequence ID" value="AAM68062.1"/>
    <property type="molecule type" value="Genomic_DNA"/>
</dbReference>
<dbReference type="RefSeq" id="WP_011054028.1">
    <property type="nucleotide sequence ID" value="NC_004061.1"/>
</dbReference>
<dbReference type="SMR" id="Q8K939"/>
<dbReference type="STRING" id="198804.BUsg_519"/>
<dbReference type="GeneID" id="93003994"/>
<dbReference type="KEGG" id="bas:BUsg_519"/>
<dbReference type="eggNOG" id="COG0337">
    <property type="taxonomic scope" value="Bacteria"/>
</dbReference>
<dbReference type="HOGENOM" id="CLU_001201_0_2_6"/>
<dbReference type="UniPathway" id="UPA00053">
    <property type="reaction ID" value="UER00085"/>
</dbReference>
<dbReference type="Proteomes" id="UP000000416">
    <property type="component" value="Chromosome"/>
</dbReference>
<dbReference type="GO" id="GO:0005737">
    <property type="term" value="C:cytoplasm"/>
    <property type="evidence" value="ECO:0007669"/>
    <property type="project" value="UniProtKB-SubCell"/>
</dbReference>
<dbReference type="GO" id="GO:0003856">
    <property type="term" value="F:3-dehydroquinate synthase activity"/>
    <property type="evidence" value="ECO:0007669"/>
    <property type="project" value="UniProtKB-UniRule"/>
</dbReference>
<dbReference type="GO" id="GO:0046872">
    <property type="term" value="F:metal ion binding"/>
    <property type="evidence" value="ECO:0007669"/>
    <property type="project" value="UniProtKB-KW"/>
</dbReference>
<dbReference type="GO" id="GO:0000166">
    <property type="term" value="F:nucleotide binding"/>
    <property type="evidence" value="ECO:0007669"/>
    <property type="project" value="UniProtKB-KW"/>
</dbReference>
<dbReference type="GO" id="GO:0008652">
    <property type="term" value="P:amino acid biosynthetic process"/>
    <property type="evidence" value="ECO:0007669"/>
    <property type="project" value="UniProtKB-KW"/>
</dbReference>
<dbReference type="GO" id="GO:0009073">
    <property type="term" value="P:aromatic amino acid family biosynthetic process"/>
    <property type="evidence" value="ECO:0007669"/>
    <property type="project" value="UniProtKB-KW"/>
</dbReference>
<dbReference type="GO" id="GO:0009423">
    <property type="term" value="P:chorismate biosynthetic process"/>
    <property type="evidence" value="ECO:0007669"/>
    <property type="project" value="UniProtKB-UniRule"/>
</dbReference>
<dbReference type="CDD" id="cd08195">
    <property type="entry name" value="DHQS"/>
    <property type="match status" value="1"/>
</dbReference>
<dbReference type="FunFam" id="1.20.1090.10:FF:000002">
    <property type="entry name" value="3-dehydroquinate synthase"/>
    <property type="match status" value="1"/>
</dbReference>
<dbReference type="FunFam" id="3.40.50.1970:FF:000001">
    <property type="entry name" value="3-dehydroquinate synthase"/>
    <property type="match status" value="1"/>
</dbReference>
<dbReference type="Gene3D" id="3.40.50.1970">
    <property type="match status" value="1"/>
</dbReference>
<dbReference type="Gene3D" id="1.20.1090.10">
    <property type="entry name" value="Dehydroquinate synthase-like - alpha domain"/>
    <property type="match status" value="1"/>
</dbReference>
<dbReference type="HAMAP" id="MF_00110">
    <property type="entry name" value="DHQ_synthase"/>
    <property type="match status" value="1"/>
</dbReference>
<dbReference type="InterPro" id="IPR050071">
    <property type="entry name" value="Dehydroquinate_synthase"/>
</dbReference>
<dbReference type="InterPro" id="IPR016037">
    <property type="entry name" value="DHQ_synth_AroB"/>
</dbReference>
<dbReference type="InterPro" id="IPR030963">
    <property type="entry name" value="DHQ_synth_fam"/>
</dbReference>
<dbReference type="InterPro" id="IPR030960">
    <property type="entry name" value="DHQS/DOIS_N"/>
</dbReference>
<dbReference type="InterPro" id="IPR056179">
    <property type="entry name" value="DHQS_C"/>
</dbReference>
<dbReference type="NCBIfam" id="TIGR01357">
    <property type="entry name" value="aroB"/>
    <property type="match status" value="1"/>
</dbReference>
<dbReference type="PANTHER" id="PTHR43622">
    <property type="entry name" value="3-DEHYDROQUINATE SYNTHASE"/>
    <property type="match status" value="1"/>
</dbReference>
<dbReference type="PANTHER" id="PTHR43622:SF7">
    <property type="entry name" value="3-DEHYDROQUINATE SYNTHASE, CHLOROPLASTIC"/>
    <property type="match status" value="1"/>
</dbReference>
<dbReference type="Pfam" id="PF01761">
    <property type="entry name" value="DHQ_synthase"/>
    <property type="match status" value="1"/>
</dbReference>
<dbReference type="Pfam" id="PF24621">
    <property type="entry name" value="DHQS_C"/>
    <property type="match status" value="1"/>
</dbReference>
<dbReference type="PIRSF" id="PIRSF001455">
    <property type="entry name" value="DHQ_synth"/>
    <property type="match status" value="1"/>
</dbReference>
<dbReference type="SUPFAM" id="SSF56796">
    <property type="entry name" value="Dehydroquinate synthase-like"/>
    <property type="match status" value="1"/>
</dbReference>
<comment type="function">
    <text evidence="1">Catalyzes the conversion of 3-deoxy-D-arabino-heptulosonate 7-phosphate (DAHP) to dehydroquinate (DHQ).</text>
</comment>
<comment type="catalytic activity">
    <reaction evidence="1">
        <text>7-phospho-2-dehydro-3-deoxy-D-arabino-heptonate = 3-dehydroquinate + phosphate</text>
        <dbReference type="Rhea" id="RHEA:21968"/>
        <dbReference type="ChEBI" id="CHEBI:32364"/>
        <dbReference type="ChEBI" id="CHEBI:43474"/>
        <dbReference type="ChEBI" id="CHEBI:58394"/>
        <dbReference type="EC" id="4.2.3.4"/>
    </reaction>
</comment>
<comment type="cofactor">
    <cofactor evidence="1">
        <name>NAD(+)</name>
        <dbReference type="ChEBI" id="CHEBI:57540"/>
    </cofactor>
</comment>
<comment type="cofactor">
    <cofactor evidence="1">
        <name>Co(2+)</name>
        <dbReference type="ChEBI" id="CHEBI:48828"/>
    </cofactor>
    <cofactor evidence="1">
        <name>Zn(2+)</name>
        <dbReference type="ChEBI" id="CHEBI:29105"/>
    </cofactor>
    <text evidence="1">Binds 1 divalent metal cation per subunit. Can use either Co(2+) or Zn(2+).</text>
</comment>
<comment type="pathway">
    <text evidence="1">Metabolic intermediate biosynthesis; chorismate biosynthesis; chorismate from D-erythrose 4-phosphate and phosphoenolpyruvate: step 2/7.</text>
</comment>
<comment type="subcellular location">
    <subcellularLocation>
        <location evidence="1">Cytoplasm</location>
    </subcellularLocation>
</comment>
<comment type="similarity">
    <text evidence="1">Belongs to the sugar phosphate cyclases superfamily. Dehydroquinate synthase family.</text>
</comment>
<gene>
    <name evidence="1" type="primary">aroB</name>
    <name type="ordered locus">BUsg_519</name>
</gene>
<sequence>MEQLKVVLGKRSYPINIGSSIIQEDNIFWPLNPGNQAMLITNKTLANLFKDKVFFHLRKSGIKIDQVILSDGEQFKTLNEMEVIISALLEKKHSRDTTLIALGGGVIGDLTGFSASIYQRGVRFIQIPTTLLSQVDASVGGKTGVNHLLGKNMVGSFWQPSSVIIDINFLKTLPYNELVSGMAEVIKYAVIFDANFFEWLEENIENLLLLNDELMSYCIKKCCELKAQIIALDERENNFRALLNFGHTYGHAIEAHAGYGSWLHGEAISVGMVMASRTSELIGCLKKTDYKRILSLLKKAGLPVKGPKNMSAASYLPYMMRDKKVISGEMRLVLPISIGKAKIYSGIDKNIILSAIKDSQ</sequence>
<organism>
    <name type="scientific">Buchnera aphidicola subsp. Schizaphis graminum (strain Sg)</name>
    <dbReference type="NCBI Taxonomy" id="198804"/>
    <lineage>
        <taxon>Bacteria</taxon>
        <taxon>Pseudomonadati</taxon>
        <taxon>Pseudomonadota</taxon>
        <taxon>Gammaproteobacteria</taxon>
        <taxon>Enterobacterales</taxon>
        <taxon>Erwiniaceae</taxon>
        <taxon>Buchnera</taxon>
    </lineage>
</organism>
<keyword id="KW-0028">Amino-acid biosynthesis</keyword>
<keyword id="KW-0057">Aromatic amino acid biosynthesis</keyword>
<keyword id="KW-0170">Cobalt</keyword>
<keyword id="KW-0963">Cytoplasm</keyword>
<keyword id="KW-0456">Lyase</keyword>
<keyword id="KW-0479">Metal-binding</keyword>
<keyword id="KW-0520">NAD</keyword>
<keyword id="KW-0547">Nucleotide-binding</keyword>
<keyword id="KW-0862">Zinc</keyword>
<proteinExistence type="inferred from homology"/>
<accession>Q8K939</accession>